<protein>
    <recommendedName>
        <fullName evidence="8">Transcription factor TGAL4</fullName>
    </recommendedName>
    <alternativeName>
        <fullName evidence="6">bZIP transcription factor 79</fullName>
        <shortName evidence="6">OsbZIP79</shortName>
    </alternativeName>
</protein>
<proteinExistence type="evidence at protein level"/>
<organism>
    <name type="scientific">Oryza sativa subsp. japonica</name>
    <name type="common">Rice</name>
    <dbReference type="NCBI Taxonomy" id="39947"/>
    <lineage>
        <taxon>Eukaryota</taxon>
        <taxon>Viridiplantae</taxon>
        <taxon>Streptophyta</taxon>
        <taxon>Embryophyta</taxon>
        <taxon>Tracheophyta</taxon>
        <taxon>Spermatophyta</taxon>
        <taxon>Magnoliopsida</taxon>
        <taxon>Liliopsida</taxon>
        <taxon>Poales</taxon>
        <taxon>Poaceae</taxon>
        <taxon>BOP clade</taxon>
        <taxon>Oryzoideae</taxon>
        <taxon>Oryzeae</taxon>
        <taxon>Oryzinae</taxon>
        <taxon>Oryza</taxon>
        <taxon>Oryza sativa</taxon>
    </lineage>
</organism>
<evidence type="ECO:0000250" key="1">
    <source>
        <dbReference type="UniProtKB" id="Q7X993"/>
    </source>
</evidence>
<evidence type="ECO:0000255" key="2">
    <source>
        <dbReference type="PROSITE-ProRule" id="PRU00978"/>
    </source>
</evidence>
<evidence type="ECO:0000255" key="3">
    <source>
        <dbReference type="PROSITE-ProRule" id="PRU01147"/>
    </source>
</evidence>
<evidence type="ECO:0000256" key="4">
    <source>
        <dbReference type="SAM" id="MobiDB-lite"/>
    </source>
</evidence>
<evidence type="ECO:0000269" key="5">
    <source>
    </source>
</evidence>
<evidence type="ECO:0000303" key="6">
    <source>
    </source>
</evidence>
<evidence type="ECO:0000303" key="7">
    <source>
    </source>
</evidence>
<evidence type="ECO:0000305" key="8"/>
<evidence type="ECO:0000312" key="9">
    <source>
        <dbReference type="EMBL" id="AAX94845.1"/>
    </source>
</evidence>
<evidence type="ECO:0000312" key="10">
    <source>
        <dbReference type="EMBL" id="BAF27617.1"/>
    </source>
</evidence>
<dbReference type="EMBL" id="AC116949">
    <property type="protein sequence ID" value="AAX94845.1"/>
    <property type="molecule type" value="Genomic_DNA"/>
</dbReference>
<dbReference type="EMBL" id="DP000010">
    <property type="protein sequence ID" value="ABA91512.1"/>
    <property type="molecule type" value="Genomic_DNA"/>
</dbReference>
<dbReference type="EMBL" id="AP008217">
    <property type="protein sequence ID" value="BAF27617.1"/>
    <property type="molecule type" value="Genomic_DNA"/>
</dbReference>
<dbReference type="EMBL" id="AP014967">
    <property type="protein sequence ID" value="BAT12728.1"/>
    <property type="molecule type" value="Genomic_DNA"/>
</dbReference>
<dbReference type="EMBL" id="AK069411">
    <property type="protein sequence ID" value="BAG91422.1"/>
    <property type="molecule type" value="mRNA"/>
</dbReference>
<dbReference type="RefSeq" id="NP_001391375.1">
    <property type="nucleotide sequence ID" value="NM_001404446.1"/>
</dbReference>
<dbReference type="RefSeq" id="XP_015617800.1">
    <property type="nucleotide sequence ID" value="XM_015762314.3"/>
</dbReference>
<dbReference type="SMR" id="Q53Q70"/>
<dbReference type="STRING" id="39947.Q53Q70"/>
<dbReference type="PaxDb" id="39947-Q53Q70"/>
<dbReference type="EnsemblPlants" id="Os11t0152700-01">
    <property type="protein sequence ID" value="Os11t0152700-01"/>
    <property type="gene ID" value="Os11g0152700"/>
</dbReference>
<dbReference type="EnsemblPlants" id="Os11t0152700-02">
    <property type="protein sequence ID" value="Os11t0152700-02"/>
    <property type="gene ID" value="Os11g0152700"/>
</dbReference>
<dbReference type="GeneID" id="4349800"/>
<dbReference type="Gramene" id="Os11t0152700-01">
    <property type="protein sequence ID" value="Os11t0152700-01"/>
    <property type="gene ID" value="Os11g0152700"/>
</dbReference>
<dbReference type="Gramene" id="Os11t0152700-02">
    <property type="protein sequence ID" value="Os11t0152700-02"/>
    <property type="gene ID" value="Os11g0152700"/>
</dbReference>
<dbReference type="KEGG" id="dosa:Os11g0152700"/>
<dbReference type="KEGG" id="osa:4349800"/>
<dbReference type="eggNOG" id="ENOG502QRFK">
    <property type="taxonomic scope" value="Eukaryota"/>
</dbReference>
<dbReference type="HOGENOM" id="CLU_024782_0_3_1"/>
<dbReference type="InParanoid" id="Q53Q70"/>
<dbReference type="OMA" id="HAHLPDS"/>
<dbReference type="OrthoDB" id="2015618at2759"/>
<dbReference type="PlantReactome" id="R-OSA-6788019">
    <property type="pathway name" value="Salicylic acid signaling"/>
</dbReference>
<dbReference type="Proteomes" id="UP000000763">
    <property type="component" value="Chromosome 11"/>
</dbReference>
<dbReference type="Proteomes" id="UP000059680">
    <property type="component" value="Chromosome 11"/>
</dbReference>
<dbReference type="GO" id="GO:0005634">
    <property type="term" value="C:nucleus"/>
    <property type="evidence" value="ECO:0007669"/>
    <property type="project" value="UniProtKB-SubCell"/>
</dbReference>
<dbReference type="GO" id="GO:0003700">
    <property type="term" value="F:DNA-binding transcription factor activity"/>
    <property type="evidence" value="ECO:0007669"/>
    <property type="project" value="InterPro"/>
</dbReference>
<dbReference type="GO" id="GO:0043565">
    <property type="term" value="F:sequence-specific DNA binding"/>
    <property type="evidence" value="ECO:0007669"/>
    <property type="project" value="InterPro"/>
</dbReference>
<dbReference type="GO" id="GO:0006952">
    <property type="term" value="P:defense response"/>
    <property type="evidence" value="ECO:0007669"/>
    <property type="project" value="UniProtKB-KW"/>
</dbReference>
<dbReference type="GO" id="GO:0006351">
    <property type="term" value="P:DNA-templated transcription"/>
    <property type="evidence" value="ECO:0007669"/>
    <property type="project" value="InterPro"/>
</dbReference>
<dbReference type="FunFam" id="1.20.5.170:FF:000019">
    <property type="entry name" value="BZIP family transcription factor"/>
    <property type="match status" value="1"/>
</dbReference>
<dbReference type="Gene3D" id="1.20.5.170">
    <property type="match status" value="1"/>
</dbReference>
<dbReference type="InterPro" id="IPR004827">
    <property type="entry name" value="bZIP"/>
</dbReference>
<dbReference type="InterPro" id="IPR046347">
    <property type="entry name" value="bZIP_sf"/>
</dbReference>
<dbReference type="InterPro" id="IPR025422">
    <property type="entry name" value="TGA_domain"/>
</dbReference>
<dbReference type="PANTHER" id="PTHR45693">
    <property type="entry name" value="TRANSCRIPTION FACTOR TGA9"/>
    <property type="match status" value="1"/>
</dbReference>
<dbReference type="PANTHER" id="PTHR45693:SF28">
    <property type="entry name" value="TRANSCRIPTION FACTOR TGAL4"/>
    <property type="match status" value="1"/>
</dbReference>
<dbReference type="Pfam" id="PF00170">
    <property type="entry name" value="bZIP_1"/>
    <property type="match status" value="1"/>
</dbReference>
<dbReference type="Pfam" id="PF14144">
    <property type="entry name" value="DOG1"/>
    <property type="match status" value="1"/>
</dbReference>
<dbReference type="SUPFAM" id="SSF57959">
    <property type="entry name" value="Leucine zipper domain"/>
    <property type="match status" value="1"/>
</dbReference>
<dbReference type="PROSITE" id="PS50217">
    <property type="entry name" value="BZIP"/>
    <property type="match status" value="1"/>
</dbReference>
<dbReference type="PROSITE" id="PS00036">
    <property type="entry name" value="BZIP_BASIC"/>
    <property type="match status" value="1"/>
</dbReference>
<dbReference type="PROSITE" id="PS51806">
    <property type="entry name" value="DOG1"/>
    <property type="match status" value="1"/>
</dbReference>
<keyword id="KW-0238">DNA-binding</keyword>
<keyword id="KW-0539">Nucleus</keyword>
<keyword id="KW-0611">Plant defense</keyword>
<keyword id="KW-1185">Reference proteome</keyword>
<keyword id="KW-0804">Transcription</keyword>
<keyword id="KW-0805">Transcription regulation</keyword>
<reference key="1">
    <citation type="journal article" date="2005" name="BMC Biol.">
        <title>The sequence of rice chromosomes 11 and 12, rich in disease resistance genes and recent gene duplications.</title>
        <authorList>
            <consortium name="The rice chromosomes 11 and 12 sequencing consortia"/>
        </authorList>
    </citation>
    <scope>NUCLEOTIDE SEQUENCE [LARGE SCALE GENOMIC DNA]</scope>
    <source>
        <strain>cv. Nipponbare</strain>
    </source>
</reference>
<reference key="2">
    <citation type="journal article" date="2005" name="Nature">
        <title>The map-based sequence of the rice genome.</title>
        <authorList>
            <consortium name="International rice genome sequencing project (IRGSP)"/>
        </authorList>
    </citation>
    <scope>NUCLEOTIDE SEQUENCE [LARGE SCALE GENOMIC DNA]</scope>
    <source>
        <strain>cv. Nipponbare</strain>
    </source>
</reference>
<reference key="3">
    <citation type="journal article" date="2008" name="Nucleic Acids Res.">
        <title>The rice annotation project database (RAP-DB): 2008 update.</title>
        <authorList>
            <consortium name="The rice annotation project (RAP)"/>
        </authorList>
    </citation>
    <scope>GENOME REANNOTATION</scope>
    <source>
        <strain>cv. Nipponbare</strain>
    </source>
</reference>
<reference key="4">
    <citation type="journal article" date="2013" name="Rice">
        <title>Improvement of the Oryza sativa Nipponbare reference genome using next generation sequence and optical map data.</title>
        <authorList>
            <person name="Kawahara Y."/>
            <person name="de la Bastide M."/>
            <person name="Hamilton J.P."/>
            <person name="Kanamori H."/>
            <person name="McCombie W.R."/>
            <person name="Ouyang S."/>
            <person name="Schwartz D.C."/>
            <person name="Tanaka T."/>
            <person name="Wu J."/>
            <person name="Zhou S."/>
            <person name="Childs K.L."/>
            <person name="Davidson R.M."/>
            <person name="Lin H."/>
            <person name="Quesada-Ocampo L."/>
            <person name="Vaillancourt B."/>
            <person name="Sakai H."/>
            <person name="Lee S.S."/>
            <person name="Kim J."/>
            <person name="Numa H."/>
            <person name="Itoh T."/>
            <person name="Buell C.R."/>
            <person name="Matsumoto T."/>
        </authorList>
    </citation>
    <scope>GENOME REANNOTATION</scope>
    <source>
        <strain>cv. Nipponbare</strain>
    </source>
</reference>
<reference key="5">
    <citation type="journal article" date="2003" name="Science">
        <title>Collection, mapping, and annotation of over 28,000 cDNA clones from japonica rice.</title>
        <authorList>
            <consortium name="The rice full-length cDNA consortium"/>
        </authorList>
    </citation>
    <scope>NUCLEOTIDE SEQUENCE [LARGE SCALE MRNA]</scope>
    <source>
        <strain>cv. Nipponbare</strain>
    </source>
</reference>
<reference key="6">
    <citation type="journal article" date="2008" name="Plant Physiol.">
        <title>Genomic survey and gene expression analysis of the basic leucine zipper transcription factor family in rice.</title>
        <authorList>
            <person name="Nijhawan A."/>
            <person name="Jain M."/>
            <person name="Tyagi A.K."/>
            <person name="Khurana J.P."/>
        </authorList>
    </citation>
    <scope>GENE FAMILY</scope>
    <scope>NOMENCLATURE</scope>
</reference>
<reference key="7">
    <citation type="journal article" date="2014" name="BMC Genomics">
        <title>Interaction specificity and coexpression of rice NPR1 homologs 1 and 3 (NH1 and NH3), TGA transcription factors and negative regulator of resistance (NRR) proteins.</title>
        <authorList>
            <person name="Chern M."/>
            <person name="Bai W."/>
            <person name="Ruan D."/>
            <person name="Oh T."/>
            <person name="Chen X."/>
            <person name="Ronald P.C."/>
        </authorList>
    </citation>
    <scope>INTERACTION WITH NPR1/NH1 AND NPR3/NH3</scope>
</reference>
<name>TGAL4_ORYSJ</name>
<sequence length="484" mass="52930">MGEASSSSGHPRQNPHVLGYGFHGAMPNSLPSANLFEQQGGANYFGELEEALMQQVATLRRTQQTATTTSTLHHGDTTPFSTTATAAATARPPPTLDIFPSWPMRSLHTPKEGSNVTADTTDSESSSKNNSNQNASSDQHVLVGDMAGQFDQIPQQEQHKKMATNSPTHSSKTGKALDPKTMRRLAQNREAARKSRLRKKAYIQQLESSKLKLAQMEQDIHRARSQGLLLGAPGGNTSSGAAMFDVDYARWLEEDSQRMAELHGGLHAHLPDSDLRAIVDDTLTHYDHLFNLKGMAAKADVFHLITGMWATPAERCFLWMGGFRPSELLKTLTPQLDPLTEQQVVGICNLQQSSQQAEEALSQGLDQLHQSLAETVAGGSPLDDPNVGSFMGHMAIALGQLSNLEGFVIQADNLRQQTIHQMHRILTVRQAARCFLAIGEYHNRLRALSSLWASRPREILVADEGNCGELSIAAHPSESQYSAF</sequence>
<comment type="function">
    <text evidence="1">Transcriptional regulator involved in defense response.</text>
</comment>
<comment type="subunit">
    <text evidence="5">Interacts with NPR1/NH1 and NPR3/NH3.</text>
</comment>
<comment type="subcellular location">
    <subcellularLocation>
        <location evidence="2">Nucleus</location>
    </subcellularLocation>
</comment>
<comment type="similarity">
    <text evidence="8">Belongs to the bZIP family.</text>
</comment>
<feature type="chain" id="PRO_0000437018" description="Transcription factor TGAL4">
    <location>
        <begin position="1"/>
        <end position="484"/>
    </location>
</feature>
<feature type="domain" description="bZIP" evidence="2">
    <location>
        <begin position="178"/>
        <end position="222"/>
    </location>
</feature>
<feature type="domain" description="DOG1" evidence="3">
    <location>
        <begin position="241"/>
        <end position="455"/>
    </location>
</feature>
<feature type="region of interest" description="Disordered" evidence="4">
    <location>
        <begin position="1"/>
        <end position="22"/>
    </location>
</feature>
<feature type="region of interest" description="Disordered" evidence="4">
    <location>
        <begin position="84"/>
        <end position="137"/>
    </location>
</feature>
<feature type="region of interest" description="Disordered" evidence="4">
    <location>
        <begin position="155"/>
        <end position="181"/>
    </location>
</feature>
<feature type="region of interest" description="Basic motif" evidence="2">
    <location>
        <begin position="180"/>
        <end position="200"/>
    </location>
</feature>
<feature type="region of interest" description="Leucine-zipper" evidence="2">
    <location>
        <begin position="206"/>
        <end position="220"/>
    </location>
</feature>
<feature type="compositionally biased region" description="Polar residues" evidence="4">
    <location>
        <begin position="1"/>
        <end position="11"/>
    </location>
</feature>
<feature type="compositionally biased region" description="Low complexity" evidence="4">
    <location>
        <begin position="123"/>
        <end position="137"/>
    </location>
</feature>
<feature type="compositionally biased region" description="Polar residues" evidence="4">
    <location>
        <begin position="163"/>
        <end position="173"/>
    </location>
</feature>
<gene>
    <name evidence="7" type="primary">TGAL4</name>
    <name evidence="10" type="ordered locus">Os11g0152700</name>
    <name evidence="9" type="ordered locus">LOC_Os11g05480</name>
</gene>
<accession>Q53Q70</accession>